<keyword id="KW-0238">DNA-binding</keyword>
<keyword id="KW-0804">Transcription</keyword>
<keyword id="KW-0805">Transcription regulation</keyword>
<gene>
    <name type="ordered locus">PYRAB00690</name>
    <name type="ORF">PAB2299</name>
</gene>
<feature type="chain" id="PRO_0000111757" description="Uncharacterized HTH-type transcriptional regulator PYRAB00690">
    <location>
        <begin position="1"/>
        <end position="148"/>
    </location>
</feature>
<feature type="domain" description="HTH asnC-type" evidence="1">
    <location>
        <begin position="4"/>
        <end position="65"/>
    </location>
</feature>
<feature type="DNA-binding region" description="H-T-H motif" evidence="1">
    <location>
        <begin position="23"/>
        <end position="42"/>
    </location>
</feature>
<evidence type="ECO:0000255" key="1">
    <source>
        <dbReference type="PROSITE-ProRule" id="PRU00319"/>
    </source>
</evidence>
<protein>
    <recommendedName>
        <fullName>Uncharacterized HTH-type transcriptional regulator PYRAB00690</fullName>
    </recommendedName>
</protein>
<proteinExistence type="predicted"/>
<reference key="1">
    <citation type="journal article" date="2003" name="Mol. Microbiol.">
        <title>An integrated analysis of the genome of the hyperthermophilic archaeon Pyrococcus abyssi.</title>
        <authorList>
            <person name="Cohen G.N."/>
            <person name="Barbe V."/>
            <person name="Flament D."/>
            <person name="Galperin M."/>
            <person name="Heilig R."/>
            <person name="Lecompte O."/>
            <person name="Poch O."/>
            <person name="Prieur D."/>
            <person name="Querellou J."/>
            <person name="Ripp R."/>
            <person name="Thierry J.-C."/>
            <person name="Van der Oost J."/>
            <person name="Weissenbach J."/>
            <person name="Zivanovic Y."/>
            <person name="Forterre P."/>
        </authorList>
    </citation>
    <scope>NUCLEOTIDE SEQUENCE [LARGE SCALE GENOMIC DNA]</scope>
    <source>
        <strain>GE5 / Orsay</strain>
    </source>
</reference>
<reference key="2">
    <citation type="journal article" date="2012" name="Curr. Microbiol.">
        <title>Re-annotation of two hyperthermophilic archaea Pyrococcus abyssi GE5 and Pyrococcus furiosus DSM 3638.</title>
        <authorList>
            <person name="Gao J."/>
            <person name="Wang J."/>
        </authorList>
    </citation>
    <scope>GENOME REANNOTATION</scope>
    <source>
        <strain>GE5 / Orsay</strain>
    </source>
</reference>
<accession>Q9V2K6</accession>
<accession>G8ZFQ0</accession>
<sequence length="148" mass="17205">MRKLDKVDIQLVKILSQNSRLTYRELAELMNTTRQRIARRITKLKKLGVIKKFTIIPDLDKLGYMYAFVLVKLRVPSEVDAMISEISNVEYVKEIEKGVGRYNLIVRLLLPKDLKEAEGIINEFLQKIKNAESVEVVLISEIKKFEII</sequence>
<dbReference type="EMBL" id="AJ248283">
    <property type="protein sequence ID" value="CAB48992.1"/>
    <property type="molecule type" value="Genomic_DNA"/>
</dbReference>
<dbReference type="EMBL" id="HE613800">
    <property type="protein sequence ID" value="CCE69441.1"/>
    <property type="molecule type" value="Genomic_DNA"/>
</dbReference>
<dbReference type="PIR" id="A75193">
    <property type="entry name" value="A75193"/>
</dbReference>
<dbReference type="RefSeq" id="WP_010867193.1">
    <property type="nucleotide sequence ID" value="NC_000868.1"/>
</dbReference>
<dbReference type="SMR" id="Q9V2K6"/>
<dbReference type="STRING" id="272844.PAB2299"/>
<dbReference type="KEGG" id="pab:PAB2299"/>
<dbReference type="PATRIC" id="fig|272844.11.peg.78"/>
<dbReference type="eggNOG" id="arCOG01581">
    <property type="taxonomic scope" value="Archaea"/>
</dbReference>
<dbReference type="HOGENOM" id="CLU_091233_5_4_2"/>
<dbReference type="OrthoDB" id="57033at2157"/>
<dbReference type="PhylomeDB" id="Q9V2K6"/>
<dbReference type="Proteomes" id="UP000000810">
    <property type="component" value="Chromosome"/>
</dbReference>
<dbReference type="Proteomes" id="UP000009139">
    <property type="component" value="Chromosome"/>
</dbReference>
<dbReference type="GO" id="GO:0043565">
    <property type="term" value="F:sequence-specific DNA binding"/>
    <property type="evidence" value="ECO:0007669"/>
    <property type="project" value="InterPro"/>
</dbReference>
<dbReference type="Gene3D" id="3.30.70.920">
    <property type="match status" value="1"/>
</dbReference>
<dbReference type="Gene3D" id="1.10.10.10">
    <property type="entry name" value="Winged helix-like DNA-binding domain superfamily/Winged helix DNA-binding domain"/>
    <property type="match status" value="1"/>
</dbReference>
<dbReference type="InterPro" id="IPR000485">
    <property type="entry name" value="AsnC-type_HTH_dom"/>
</dbReference>
<dbReference type="InterPro" id="IPR011008">
    <property type="entry name" value="Dimeric_a/b-barrel"/>
</dbReference>
<dbReference type="InterPro" id="IPR050684">
    <property type="entry name" value="HTH-Siroheme_Decarb"/>
</dbReference>
<dbReference type="InterPro" id="IPR019888">
    <property type="entry name" value="Tscrpt_reg_AsnC-like"/>
</dbReference>
<dbReference type="InterPro" id="IPR019885">
    <property type="entry name" value="Tscrpt_reg_HTH_AsnC-type_CS"/>
</dbReference>
<dbReference type="InterPro" id="IPR036388">
    <property type="entry name" value="WH-like_DNA-bd_sf"/>
</dbReference>
<dbReference type="InterPro" id="IPR036390">
    <property type="entry name" value="WH_DNA-bd_sf"/>
</dbReference>
<dbReference type="PANTHER" id="PTHR43413:SF7">
    <property type="entry name" value="HTH-TYPE TRANSCRIPTIONAL REGULATOR PTR2"/>
    <property type="match status" value="1"/>
</dbReference>
<dbReference type="PANTHER" id="PTHR43413">
    <property type="entry name" value="TRANSCRIPTIONAL REGULATOR, ASNC FAMILY"/>
    <property type="match status" value="1"/>
</dbReference>
<dbReference type="Pfam" id="PF13412">
    <property type="entry name" value="HTH_24"/>
    <property type="match status" value="1"/>
</dbReference>
<dbReference type="PRINTS" id="PR00033">
    <property type="entry name" value="HTHASNC"/>
</dbReference>
<dbReference type="SMART" id="SM00344">
    <property type="entry name" value="HTH_ASNC"/>
    <property type="match status" value="1"/>
</dbReference>
<dbReference type="SUPFAM" id="SSF54909">
    <property type="entry name" value="Dimeric alpha+beta barrel"/>
    <property type="match status" value="1"/>
</dbReference>
<dbReference type="SUPFAM" id="SSF46785">
    <property type="entry name" value="Winged helix' DNA-binding domain"/>
    <property type="match status" value="1"/>
</dbReference>
<dbReference type="PROSITE" id="PS00519">
    <property type="entry name" value="HTH_ASNC_1"/>
    <property type="match status" value="1"/>
</dbReference>
<dbReference type="PROSITE" id="PS50956">
    <property type="entry name" value="HTH_ASNC_2"/>
    <property type="match status" value="1"/>
</dbReference>
<organism>
    <name type="scientific">Pyrococcus abyssi (strain GE5 / Orsay)</name>
    <dbReference type="NCBI Taxonomy" id="272844"/>
    <lineage>
        <taxon>Archaea</taxon>
        <taxon>Methanobacteriati</taxon>
        <taxon>Methanobacteriota</taxon>
        <taxon>Thermococci</taxon>
        <taxon>Thermococcales</taxon>
        <taxon>Thermococcaceae</taxon>
        <taxon>Pyrococcus</taxon>
    </lineage>
</organism>
<name>REG2_PYRAB</name>